<proteinExistence type="evidence at transcript level"/>
<sequence length="784" mass="89988">MPHTLWMVWVLGVIISLSKEESSNQASLSCDHNGICKGSSGSLNSIPSGLTEAVKSLDLSNNRITYISNSDLQRYVNLQALVLTSNGINTIEEDSFSSLGRLEHLDLSYNYLSNLSSSWFKPLSSLKFLNLLGNPYKTLGETSLFSHLTKLRILRVGNMDTFTKIQRKDFAGLTFLEELEIDASDLQSYEPKSLKSIQNVSHLILHMKQHILLLEIFVDLTSSVECLELRDTDLDTFHFSELSTGETNSLIKKFTFRNVKITDESLFQVMKLLSQISGLLELEFDDCTLNGVGDFRGSDNDRVIDPGKVETVTIRRLHIPQFYSFNDLSTLYPLTERVKRITVENSKVFLVPCLLSRHLKSLEYLDLSENLMVEEYLKNSACEDAWPSLQTLILRQNHLASLGKTGETLLTLKNLTNLDISKNTFHYMPETCQWPEKMKYLNLSSTRIHSVTGCIPKTLEILDISNNNLNLFSLNLPQLKELYISRNKLMTLPDASLLPMLLVLKISRNTITTFSKEQLDSFHTLKTLEAGGNNFICSCEFLSFTQEQQALAKVLVDWPANYLCDSPSHVRGQRVQDVRLSVSECHRAALVSGMCCALFLLILLMGVLCHRFHGLWYMKMMWAWLQAKRKPRKAPNRDICYDAFVSYSERDAYWVENLMVQELENFNPPFKLCLHKRDFIPGKWIIDNIIDSIEKSHKTVFVLSENFVKSEWCKYELDFSHFRLFDENNDAAILVLLEPIEKKAIPQRFCKLRKIMNTKTYLEWPMDEARQEGFWVNLRAAIKS</sequence>
<name>TLR2_MACFA</name>
<dbReference type="EMBL" id="AY045573">
    <property type="protein sequence ID" value="AAK91868.1"/>
    <property type="molecule type" value="mRNA"/>
</dbReference>
<dbReference type="EMBL" id="AB445629">
    <property type="protein sequence ID" value="BAG55026.1"/>
    <property type="molecule type" value="mRNA"/>
</dbReference>
<dbReference type="RefSeq" id="NP_001306542.1">
    <property type="nucleotide sequence ID" value="NM_001319613.1"/>
</dbReference>
<dbReference type="SMR" id="Q95M53"/>
<dbReference type="STRING" id="9541.ENSMFAP00000011078"/>
<dbReference type="GlyCosmos" id="Q95M53">
    <property type="glycosylation" value="4 sites, No reported glycans"/>
</dbReference>
<dbReference type="eggNOG" id="KOG4641">
    <property type="taxonomic scope" value="Eukaryota"/>
</dbReference>
<dbReference type="Proteomes" id="UP000233100">
    <property type="component" value="Unplaced"/>
</dbReference>
<dbReference type="GO" id="GO:0005794">
    <property type="term" value="C:Golgi apparatus"/>
    <property type="evidence" value="ECO:0000250"/>
    <property type="project" value="UniProtKB"/>
</dbReference>
<dbReference type="GO" id="GO:0045121">
    <property type="term" value="C:membrane raft"/>
    <property type="evidence" value="ECO:0000250"/>
    <property type="project" value="UniProtKB"/>
</dbReference>
<dbReference type="GO" id="GO:0030670">
    <property type="term" value="C:phagocytic vesicle membrane"/>
    <property type="evidence" value="ECO:0007669"/>
    <property type="project" value="UniProtKB-SubCell"/>
</dbReference>
<dbReference type="GO" id="GO:0005886">
    <property type="term" value="C:plasma membrane"/>
    <property type="evidence" value="ECO:0007669"/>
    <property type="project" value="TreeGrafter"/>
</dbReference>
<dbReference type="GO" id="GO:0043235">
    <property type="term" value="C:receptor complex"/>
    <property type="evidence" value="ECO:0007669"/>
    <property type="project" value="TreeGrafter"/>
</dbReference>
<dbReference type="GO" id="GO:0061809">
    <property type="term" value="F:NAD+ nucleosidase activity, cyclic ADP-ribose generating"/>
    <property type="evidence" value="ECO:0007669"/>
    <property type="project" value="UniProtKB-EC"/>
</dbReference>
<dbReference type="GO" id="GO:0004888">
    <property type="term" value="F:transmembrane signaling receptor activity"/>
    <property type="evidence" value="ECO:0007669"/>
    <property type="project" value="InterPro"/>
</dbReference>
<dbReference type="GO" id="GO:0042497">
    <property type="term" value="F:triacyl lipopeptide binding"/>
    <property type="evidence" value="ECO:0007669"/>
    <property type="project" value="TreeGrafter"/>
</dbReference>
<dbReference type="GO" id="GO:0071726">
    <property type="term" value="P:cellular response to diacyl bacterial lipopeptide"/>
    <property type="evidence" value="ECO:0000250"/>
    <property type="project" value="UniProtKB"/>
</dbReference>
<dbReference type="GO" id="GO:0071727">
    <property type="term" value="P:cellular response to triacyl bacterial lipopeptide"/>
    <property type="evidence" value="ECO:0000250"/>
    <property type="project" value="UniProtKB"/>
</dbReference>
<dbReference type="GO" id="GO:0006954">
    <property type="term" value="P:inflammatory response"/>
    <property type="evidence" value="ECO:0007669"/>
    <property type="project" value="UniProtKB-KW"/>
</dbReference>
<dbReference type="GO" id="GO:0045087">
    <property type="term" value="P:innate immune response"/>
    <property type="evidence" value="ECO:0007669"/>
    <property type="project" value="UniProtKB-KW"/>
</dbReference>
<dbReference type="GO" id="GO:0002224">
    <property type="term" value="P:toll-like receptor signaling pathway"/>
    <property type="evidence" value="ECO:0007669"/>
    <property type="project" value="InterPro"/>
</dbReference>
<dbReference type="FunFam" id="3.40.50.10140:FF:000001">
    <property type="entry name" value="Toll-like receptor 2"/>
    <property type="match status" value="1"/>
</dbReference>
<dbReference type="FunFam" id="3.80.10.10:FF:000046">
    <property type="entry name" value="Toll-like receptor 2"/>
    <property type="match status" value="1"/>
</dbReference>
<dbReference type="Gene3D" id="3.80.10.10">
    <property type="entry name" value="Ribonuclease Inhibitor"/>
    <property type="match status" value="1"/>
</dbReference>
<dbReference type="Gene3D" id="3.40.50.10140">
    <property type="entry name" value="Toll/interleukin-1 receptor homology (TIR) domain"/>
    <property type="match status" value="1"/>
</dbReference>
<dbReference type="InterPro" id="IPR000483">
    <property type="entry name" value="Cys-rich_flank_reg_C"/>
</dbReference>
<dbReference type="InterPro" id="IPR001611">
    <property type="entry name" value="Leu-rich_rpt"/>
</dbReference>
<dbReference type="InterPro" id="IPR003591">
    <property type="entry name" value="Leu-rich_rpt_typical-subtyp"/>
</dbReference>
<dbReference type="InterPro" id="IPR032675">
    <property type="entry name" value="LRR_dom_sf"/>
</dbReference>
<dbReference type="InterPro" id="IPR000157">
    <property type="entry name" value="TIR_dom"/>
</dbReference>
<dbReference type="InterPro" id="IPR017241">
    <property type="entry name" value="Toll-like_receptor"/>
</dbReference>
<dbReference type="InterPro" id="IPR035897">
    <property type="entry name" value="Toll_tir_struct_dom_sf"/>
</dbReference>
<dbReference type="PANTHER" id="PTHR24365">
    <property type="entry name" value="TOLL-LIKE RECEPTOR"/>
    <property type="match status" value="1"/>
</dbReference>
<dbReference type="PANTHER" id="PTHR24365:SF17">
    <property type="entry name" value="TOLL-LIKE RECEPTOR 2"/>
    <property type="match status" value="1"/>
</dbReference>
<dbReference type="Pfam" id="PF13855">
    <property type="entry name" value="LRR_8"/>
    <property type="match status" value="2"/>
</dbReference>
<dbReference type="Pfam" id="PF01463">
    <property type="entry name" value="LRRCT"/>
    <property type="match status" value="1"/>
</dbReference>
<dbReference type="Pfam" id="PF01582">
    <property type="entry name" value="TIR"/>
    <property type="match status" value="1"/>
</dbReference>
<dbReference type="PIRSF" id="PIRSF037595">
    <property type="entry name" value="Toll-like_receptor"/>
    <property type="match status" value="1"/>
</dbReference>
<dbReference type="PRINTS" id="PR01537">
    <property type="entry name" value="INTRLKN1R1F"/>
</dbReference>
<dbReference type="PRINTS" id="PR00019">
    <property type="entry name" value="LEURICHRPT"/>
</dbReference>
<dbReference type="SMART" id="SM00364">
    <property type="entry name" value="LRR_BAC"/>
    <property type="match status" value="3"/>
</dbReference>
<dbReference type="SMART" id="SM00369">
    <property type="entry name" value="LRR_TYP"/>
    <property type="match status" value="7"/>
</dbReference>
<dbReference type="SMART" id="SM00082">
    <property type="entry name" value="LRRCT"/>
    <property type="match status" value="1"/>
</dbReference>
<dbReference type="SMART" id="SM00255">
    <property type="entry name" value="TIR"/>
    <property type="match status" value="1"/>
</dbReference>
<dbReference type="SUPFAM" id="SSF52058">
    <property type="entry name" value="L domain-like"/>
    <property type="match status" value="1"/>
</dbReference>
<dbReference type="SUPFAM" id="SSF52047">
    <property type="entry name" value="RNI-like"/>
    <property type="match status" value="1"/>
</dbReference>
<dbReference type="SUPFAM" id="SSF52200">
    <property type="entry name" value="Toll/Interleukin receptor TIR domain"/>
    <property type="match status" value="1"/>
</dbReference>
<dbReference type="PROSITE" id="PS51450">
    <property type="entry name" value="LRR"/>
    <property type="match status" value="11"/>
</dbReference>
<dbReference type="PROSITE" id="PS50104">
    <property type="entry name" value="TIR"/>
    <property type="match status" value="1"/>
</dbReference>
<organism>
    <name type="scientific">Macaca fascicularis</name>
    <name type="common">Crab-eating macaque</name>
    <name type="synonym">Cynomolgus monkey</name>
    <dbReference type="NCBI Taxonomy" id="9541"/>
    <lineage>
        <taxon>Eukaryota</taxon>
        <taxon>Metazoa</taxon>
        <taxon>Chordata</taxon>
        <taxon>Craniata</taxon>
        <taxon>Vertebrata</taxon>
        <taxon>Euteleostomi</taxon>
        <taxon>Mammalia</taxon>
        <taxon>Eutheria</taxon>
        <taxon>Euarchontoglires</taxon>
        <taxon>Primates</taxon>
        <taxon>Haplorrhini</taxon>
        <taxon>Catarrhini</taxon>
        <taxon>Cercopithecidae</taxon>
        <taxon>Cercopithecinae</taxon>
        <taxon>Macaca</taxon>
    </lineage>
</organism>
<reference key="1">
    <citation type="submission" date="2001-07" db="EMBL/GenBank/DDBJ databases">
        <title>Macaca fascicularis Toll-like receptor 2.</title>
        <authorList>
            <person name="Roberts F.A."/>
            <person name="Tang S."/>
        </authorList>
    </citation>
    <scope>NUCLEOTIDE SEQUENCE [MRNA]</scope>
    <source>
        <tissue>Monocyte</tissue>
    </source>
</reference>
<reference key="2">
    <citation type="submission" date="2008-07" db="EMBL/GenBank/DDBJ databases">
        <title>Molecular evolution of the Toll-like receptor-related genes in primates.</title>
        <authorList>
            <person name="Nakajima T."/>
            <person name="Ohtani H."/>
            <person name="Satta Y."/>
            <person name="Uno Y."/>
            <person name="Akari H."/>
            <person name="Ishida T."/>
            <person name="Kimura A."/>
        </authorList>
    </citation>
    <scope>NUCLEOTIDE SEQUENCE [MRNA]</scope>
</reference>
<keyword id="KW-0968">Cytoplasmic vesicle</keyword>
<keyword id="KW-1015">Disulfide bond</keyword>
<keyword id="KW-0325">Glycoprotein</keyword>
<keyword id="KW-0391">Immunity</keyword>
<keyword id="KW-0395">Inflammatory response</keyword>
<keyword id="KW-0399">Innate immunity</keyword>
<keyword id="KW-1017">Isopeptide bond</keyword>
<keyword id="KW-0433">Leucine-rich repeat</keyword>
<keyword id="KW-0472">Membrane</keyword>
<keyword id="KW-0520">NAD</keyword>
<keyword id="KW-0675">Receptor</keyword>
<keyword id="KW-1185">Reference proteome</keyword>
<keyword id="KW-0677">Repeat</keyword>
<keyword id="KW-0732">Signal</keyword>
<keyword id="KW-0812">Transmembrane</keyword>
<keyword id="KW-1133">Transmembrane helix</keyword>
<keyword id="KW-0832">Ubl conjugation</keyword>
<evidence type="ECO:0000250" key="1"/>
<evidence type="ECO:0000250" key="2">
    <source>
        <dbReference type="UniProtKB" id="O00206"/>
    </source>
</evidence>
<evidence type="ECO:0000250" key="3">
    <source>
        <dbReference type="UniProtKB" id="O60603"/>
    </source>
</evidence>
<evidence type="ECO:0000250" key="4">
    <source>
        <dbReference type="UniProtKB" id="Q9QUN7"/>
    </source>
</evidence>
<evidence type="ECO:0000255" key="5"/>
<evidence type="ECO:0000255" key="6">
    <source>
        <dbReference type="PROSITE-ProRule" id="PRU00204"/>
    </source>
</evidence>
<evidence type="ECO:0000305" key="7"/>
<feature type="signal peptide" evidence="5">
    <location>
        <begin position="1"/>
        <end position="18"/>
    </location>
</feature>
<feature type="chain" id="PRO_0000034711" description="Toll-like receptor 2">
    <location>
        <begin position="19"/>
        <end position="784"/>
    </location>
</feature>
<feature type="topological domain" description="Extracellular" evidence="5">
    <location>
        <begin position="19"/>
        <end position="587"/>
    </location>
</feature>
<feature type="transmembrane region" description="Helical" evidence="5">
    <location>
        <begin position="588"/>
        <end position="608"/>
    </location>
</feature>
<feature type="topological domain" description="Cytoplasmic" evidence="5">
    <location>
        <begin position="609"/>
        <end position="784"/>
    </location>
</feature>
<feature type="repeat" description="LRR 1">
    <location>
        <begin position="54"/>
        <end position="77"/>
    </location>
</feature>
<feature type="repeat" description="LRR 2">
    <location>
        <begin position="78"/>
        <end position="101"/>
    </location>
</feature>
<feature type="repeat" description="LRR 3">
    <location>
        <begin position="102"/>
        <end position="125"/>
    </location>
</feature>
<feature type="repeat" description="LRR 4">
    <location>
        <begin position="126"/>
        <end position="150"/>
    </location>
</feature>
<feature type="repeat" description="LRR 5">
    <location>
        <begin position="151"/>
        <end position="175"/>
    </location>
</feature>
<feature type="repeat" description="LRR 6">
    <location>
        <begin position="176"/>
        <end position="199"/>
    </location>
</feature>
<feature type="repeat" description="LRR 7">
    <location>
        <begin position="200"/>
        <end position="223"/>
    </location>
</feature>
<feature type="repeat" description="LRR 8">
    <location>
        <begin position="224"/>
        <end position="250"/>
    </location>
</feature>
<feature type="repeat" description="LRR 9">
    <location>
        <begin position="251"/>
        <end position="278"/>
    </location>
</feature>
<feature type="repeat" description="LRR 10">
    <location>
        <begin position="279"/>
        <end position="308"/>
    </location>
</feature>
<feature type="repeat" description="LRR 11">
    <location>
        <begin position="309"/>
        <end position="337"/>
    </location>
</feature>
<feature type="repeat" description="LRR 12">
    <location>
        <begin position="338"/>
        <end position="361"/>
    </location>
</feature>
<feature type="repeat" description="LRR 13">
    <location>
        <begin position="362"/>
        <end position="388"/>
    </location>
</feature>
<feature type="repeat" description="LRR 14">
    <location>
        <begin position="389"/>
        <end position="414"/>
    </location>
</feature>
<feature type="repeat" description="LRR 15">
    <location>
        <begin position="415"/>
        <end position="437"/>
    </location>
</feature>
<feature type="repeat" description="LRR 16">
    <location>
        <begin position="438"/>
        <end position="457"/>
    </location>
</feature>
<feature type="repeat" description="LRR 17">
    <location>
        <begin position="458"/>
        <end position="478"/>
    </location>
</feature>
<feature type="repeat" description="LRR 18">
    <location>
        <begin position="479"/>
        <end position="500"/>
    </location>
</feature>
<feature type="repeat" description="LRR 19">
    <location>
        <begin position="501"/>
        <end position="524"/>
    </location>
</feature>
<feature type="domain" description="LRRCT">
    <location>
        <begin position="525"/>
        <end position="579"/>
    </location>
</feature>
<feature type="domain" description="TIR" evidence="6">
    <location>
        <begin position="639"/>
        <end position="782"/>
    </location>
</feature>
<feature type="short sequence motif" description="ATG16L1-binding motif">
    <location>
        <begin position="761"/>
        <end position="778"/>
    </location>
</feature>
<feature type="site" description="Interaction with bacterial lipopeptide" evidence="1">
    <location>
        <position position="349"/>
    </location>
</feature>
<feature type="glycosylation site" description="N-linked (GlcNAc...) asparagine" evidence="5">
    <location>
        <position position="114"/>
    </location>
</feature>
<feature type="glycosylation site" description="N-linked (GlcNAc...) asparagine" evidence="5">
    <location>
        <position position="199"/>
    </location>
</feature>
<feature type="glycosylation site" description="N-linked (GlcNAc...) asparagine" evidence="5">
    <location>
        <position position="414"/>
    </location>
</feature>
<feature type="glycosylation site" description="N-linked (GlcNAc...) asparagine" evidence="5">
    <location>
        <position position="442"/>
    </location>
</feature>
<feature type="disulfide bond" evidence="1">
    <location>
        <begin position="30"/>
        <end position="36"/>
    </location>
</feature>
<feature type="disulfide bond" evidence="1">
    <location>
        <begin position="353"/>
        <end position="382"/>
    </location>
</feature>
<feature type="disulfide bond" evidence="1">
    <location>
        <begin position="432"/>
        <end position="454"/>
    </location>
</feature>
<feature type="cross-link" description="Glycyl lysine isopeptide (Lys-Gly) (interchain with G-Cter in ubiquitin)" evidence="3">
    <location>
        <position position="754"/>
    </location>
</feature>
<feature type="sequence conflict" description="In Ref. 2; BAG55026." evidence="7" ref="2">
    <original>G</original>
    <variation>V</variation>
    <location>
        <position position="49"/>
    </location>
</feature>
<feature type="sequence conflict" description="In Ref. 2; BAG55026." evidence="7" ref="2">
    <original>S</original>
    <variation>C</variation>
    <location>
        <position position="56"/>
    </location>
</feature>
<feature type="sequence conflict" description="In Ref. 2; BAG55026." evidence="7" ref="2">
    <original>D</original>
    <variation>N</variation>
    <location>
        <position position="235"/>
    </location>
</feature>
<feature type="sequence conflict" description="In Ref. 2; BAG55026." evidence="7" ref="2">
    <original>V</original>
    <variation>L</variation>
    <location>
        <position position="312"/>
    </location>
</feature>
<feature type="sequence conflict" description="In Ref. 2; BAG55026." evidence="7" ref="2">
    <original>T</original>
    <variation>I</variation>
    <location>
        <position position="405"/>
    </location>
</feature>
<protein>
    <recommendedName>
        <fullName>Toll-like receptor 2</fullName>
    </recommendedName>
    <cdAntigenName>CD282</cdAntigenName>
</protein>
<comment type="function">
    <text evidence="3 4">Cooperates with LY96 to mediate the innate immune response to bacterial lipoproteins and other microbial cell wall components. Cooperates with TLR1 or TLR6 to mediate the innate immune response to bacterial lipoproteins or lipopeptides. Acts via MYD88 and TRAF6, leading to NF-kappa-B activation, cytokine secretion and the inflammatory response (By similarity). May also promote apoptosis in response to lipoproteins. Forms activation clusters composed of several receptors depending on the ligand, these clusters trigger signaling from the cell surface and subsequently are targeted to the Golgi in a lipid-raft dependent pathway. Forms the cluster TLR2:TLR6:CD14:CD36 in response to diacylated lipopeptides and TLR2:TLR1:CD14 in response to triacylated lipopeptides (By similarity).</text>
</comment>
<comment type="subunit">
    <text evidence="3 4">Interacts with LY96, TLR1 and TLR6 (via extracellular domain). TLR2 seems to exist in heterodimers with either TLR1 or TLR6 before stimulation by the ligand. The heterodimers form bigger oligomers in response to their corresponding ligands as well as further heterotypic associations with other receptors such as CD14 and/or CD36. Binds MYD88 (via TIR domain). Interacts with TICAM1. Interacts with CNPY3. Interacts with ATG16L1. Interacts with PPP1R11. Interacts with TICAM2. Interacts with TIRAP (By similarity).</text>
</comment>
<comment type="subcellular location">
    <subcellularLocation>
        <location evidence="4">Membrane</location>
        <topology evidence="5">Single-pass type I membrane protein</topology>
    </subcellularLocation>
    <subcellularLocation>
        <location evidence="4">Cytoplasmic vesicle</location>
        <location evidence="4">Phagosome membrane</location>
        <topology evidence="5">Single-pass type I membrane protein</topology>
    </subcellularLocation>
    <subcellularLocation>
        <location evidence="3">Membrane raft</location>
    </subcellularLocation>
    <text evidence="3">Does not reside in lipid rafts before stimulation but accumulates increasingly in the raft upon the presence of the microbial ligand. In response to diacylated lipoproteins, TLR2:TLR6 heterodimers are recruited in lipid rafts, this recruitment determine the intracellular targeting to the Golgi apparatus. Triacylated lipoproteins induce the same mechanism for TLR2:TLR1 heterodimers.</text>
</comment>
<comment type="domain">
    <text evidence="1">Ester-bound lipid substrates are bound through a crevice formed between the LRR 11 and LRR 12.</text>
</comment>
<comment type="domain">
    <text evidence="1">The ATG16L1-binding motif mediates interaction with ATG16L1.</text>
</comment>
<comment type="PTM">
    <text evidence="4">Ubiquitinated at Lys-754 by PPP1R11, leading to its degradation. Deubiquitinated by USP2.</text>
</comment>
<comment type="PTM">
    <text evidence="3">Glycosylation of Asn-442 is critical for secretion of the N-terminal ectodomain of TLR2.</text>
</comment>
<comment type="similarity">
    <text evidence="7">Belongs to the Toll-like receptor family.</text>
</comment>
<comment type="caution">
    <text evidence="2 7">In some plant proteins and in human SARM1, the TIR domain has NAD(+) hydrolase (NADase) activity (By similarity). However, despite the presence of the catalytic Asp residue, the isolated TIR domain of human TLR4 lacks NADase activity (By similarity). Based on this, it is unlikely that Toll-like receptors have NADase activity.</text>
</comment>
<accession>Q95M53</accession>
<accession>B3Y617</accession>
<gene>
    <name type="primary">TLR2</name>
</gene>